<organism>
    <name type="scientific">Mycosarcoma maydis</name>
    <name type="common">Corn smut fungus</name>
    <name type="synonym">Ustilago maydis</name>
    <dbReference type="NCBI Taxonomy" id="5270"/>
    <lineage>
        <taxon>Eukaryota</taxon>
        <taxon>Fungi</taxon>
        <taxon>Dikarya</taxon>
        <taxon>Basidiomycota</taxon>
        <taxon>Ustilaginomycotina</taxon>
        <taxon>Ustilaginomycetes</taxon>
        <taxon>Ustilaginales</taxon>
        <taxon>Ustilaginaceae</taxon>
        <taxon>Mycosarcoma</taxon>
    </lineage>
</organism>
<accession>Q4PB36</accession>
<accession>A0A0D1C6X9</accession>
<protein>
    <recommendedName>
        <fullName>Histone-lysine N-methyltransferase, H3 lysine-4 specific</fullName>
        <ecNumber evidence="1">2.1.1.354</ecNumber>
    </recommendedName>
    <alternativeName>
        <fullName>COMPASS component SET1</fullName>
    </alternativeName>
    <alternativeName>
        <fullName>SET domain-containing protein 1</fullName>
    </alternativeName>
</protein>
<name>SET1_MYCMD</name>
<gene>
    <name type="primary">SET1</name>
    <name type="ORF">UMAG_02677</name>
</gene>
<keyword id="KW-0156">Chromatin regulator</keyword>
<keyword id="KW-0158">Chromosome</keyword>
<keyword id="KW-0489">Methyltransferase</keyword>
<keyword id="KW-0539">Nucleus</keyword>
<keyword id="KW-1185">Reference proteome</keyword>
<keyword id="KW-0694">RNA-binding</keyword>
<keyword id="KW-0949">S-adenosyl-L-methionine</keyword>
<keyword id="KW-0808">Transferase</keyword>
<reference key="1">
    <citation type="journal article" date="2006" name="Nature">
        <title>Insights from the genome of the biotrophic fungal plant pathogen Ustilago maydis.</title>
        <authorList>
            <person name="Kaemper J."/>
            <person name="Kahmann R."/>
            <person name="Boelker M."/>
            <person name="Ma L.-J."/>
            <person name="Brefort T."/>
            <person name="Saville B.J."/>
            <person name="Banuett F."/>
            <person name="Kronstad J.W."/>
            <person name="Gold S.E."/>
            <person name="Mueller O."/>
            <person name="Perlin M.H."/>
            <person name="Woesten H.A.B."/>
            <person name="de Vries R."/>
            <person name="Ruiz-Herrera J."/>
            <person name="Reynaga-Pena C.G."/>
            <person name="Snetselaar K."/>
            <person name="McCann M."/>
            <person name="Perez-Martin J."/>
            <person name="Feldbruegge M."/>
            <person name="Basse C.W."/>
            <person name="Steinberg G."/>
            <person name="Ibeas J.I."/>
            <person name="Holloman W."/>
            <person name="Guzman P."/>
            <person name="Farman M.L."/>
            <person name="Stajich J.E."/>
            <person name="Sentandreu R."/>
            <person name="Gonzalez-Prieto J.M."/>
            <person name="Kennell J.C."/>
            <person name="Molina L."/>
            <person name="Schirawski J."/>
            <person name="Mendoza-Mendoza A."/>
            <person name="Greilinger D."/>
            <person name="Muench K."/>
            <person name="Roessel N."/>
            <person name="Scherer M."/>
            <person name="Vranes M."/>
            <person name="Ladendorf O."/>
            <person name="Vincon V."/>
            <person name="Fuchs U."/>
            <person name="Sandrock B."/>
            <person name="Meng S."/>
            <person name="Ho E.C.H."/>
            <person name="Cahill M.J."/>
            <person name="Boyce K.J."/>
            <person name="Klose J."/>
            <person name="Klosterman S.J."/>
            <person name="Deelstra H.J."/>
            <person name="Ortiz-Castellanos L."/>
            <person name="Li W."/>
            <person name="Sanchez-Alonso P."/>
            <person name="Schreier P.H."/>
            <person name="Haeuser-Hahn I."/>
            <person name="Vaupel M."/>
            <person name="Koopmann E."/>
            <person name="Friedrich G."/>
            <person name="Voss H."/>
            <person name="Schlueter T."/>
            <person name="Margolis J."/>
            <person name="Platt D."/>
            <person name="Swimmer C."/>
            <person name="Gnirke A."/>
            <person name="Chen F."/>
            <person name="Vysotskaia V."/>
            <person name="Mannhaupt G."/>
            <person name="Gueldener U."/>
            <person name="Muensterkoetter M."/>
            <person name="Haase D."/>
            <person name="Oesterheld M."/>
            <person name="Mewes H.-W."/>
            <person name="Mauceli E.W."/>
            <person name="DeCaprio D."/>
            <person name="Wade C.M."/>
            <person name="Butler J."/>
            <person name="Young S.K."/>
            <person name="Jaffe D.B."/>
            <person name="Calvo S.E."/>
            <person name="Nusbaum C."/>
            <person name="Galagan J.E."/>
            <person name="Birren B.W."/>
        </authorList>
    </citation>
    <scope>NUCLEOTIDE SEQUENCE [LARGE SCALE GENOMIC DNA]</scope>
    <source>
        <strain>DSM 14603 / FGSC 9021 / UM521</strain>
    </source>
</reference>
<reference key="2">
    <citation type="submission" date="2014-09" db="EMBL/GenBank/DDBJ databases">
        <authorList>
            <person name="Gueldener U."/>
            <person name="Muensterkoetter M."/>
            <person name="Walter M.C."/>
            <person name="Mannhaupt G."/>
            <person name="Kahmann R."/>
        </authorList>
    </citation>
    <scope>GENOME REANNOTATION</scope>
    <source>
        <strain>DSM 14603 / FGSC 9021 / UM521</strain>
    </source>
</reference>
<evidence type="ECO:0000250" key="1">
    <source>
        <dbReference type="UniProtKB" id="P38827"/>
    </source>
</evidence>
<evidence type="ECO:0000255" key="2">
    <source>
        <dbReference type="PROSITE-ProRule" id="PRU00155"/>
    </source>
</evidence>
<evidence type="ECO:0000255" key="3">
    <source>
        <dbReference type="PROSITE-ProRule" id="PRU00190"/>
    </source>
</evidence>
<evidence type="ECO:0000256" key="4">
    <source>
        <dbReference type="SAM" id="MobiDB-lite"/>
    </source>
</evidence>
<evidence type="ECO:0000305" key="5"/>
<feature type="chain" id="PRO_0000269777" description="Histone-lysine N-methyltransferase, H3 lysine-4 specific">
    <location>
        <begin position="1"/>
        <end position="1468"/>
    </location>
</feature>
<feature type="domain" description="SET" evidence="3">
    <location>
        <begin position="1327"/>
        <end position="1444"/>
    </location>
</feature>
<feature type="domain" description="Post-SET" evidence="2">
    <location>
        <begin position="1453"/>
        <end position="1468"/>
    </location>
</feature>
<feature type="region of interest" description="Disordered" evidence="4">
    <location>
        <begin position="1"/>
        <end position="439"/>
    </location>
</feature>
<feature type="region of interest" description="Disordered" evidence="4">
    <location>
        <begin position="636"/>
        <end position="737"/>
    </location>
</feature>
<feature type="region of interest" description="Disordered" evidence="4">
    <location>
        <begin position="848"/>
        <end position="884"/>
    </location>
</feature>
<feature type="region of interest" description="Disordered" evidence="4">
    <location>
        <begin position="986"/>
        <end position="1103"/>
    </location>
</feature>
<feature type="region of interest" description="Disordered" evidence="4">
    <location>
        <begin position="1141"/>
        <end position="1162"/>
    </location>
</feature>
<feature type="short sequence motif" description="RxxxRR motif" evidence="1">
    <location>
        <begin position="1293"/>
        <end position="1298"/>
    </location>
</feature>
<feature type="compositionally biased region" description="Polar residues" evidence="4">
    <location>
        <begin position="1"/>
        <end position="11"/>
    </location>
</feature>
<feature type="compositionally biased region" description="Low complexity" evidence="4">
    <location>
        <begin position="12"/>
        <end position="26"/>
    </location>
</feature>
<feature type="compositionally biased region" description="Basic and acidic residues" evidence="4">
    <location>
        <begin position="28"/>
        <end position="40"/>
    </location>
</feature>
<feature type="compositionally biased region" description="Basic and acidic residues" evidence="4">
    <location>
        <begin position="46"/>
        <end position="89"/>
    </location>
</feature>
<feature type="compositionally biased region" description="Basic and acidic residues" evidence="4">
    <location>
        <begin position="99"/>
        <end position="109"/>
    </location>
</feature>
<feature type="compositionally biased region" description="Basic and acidic residues" evidence="4">
    <location>
        <begin position="120"/>
        <end position="136"/>
    </location>
</feature>
<feature type="compositionally biased region" description="Basic and acidic residues" evidence="4">
    <location>
        <begin position="146"/>
        <end position="166"/>
    </location>
</feature>
<feature type="compositionally biased region" description="Basic and acidic residues" evidence="4">
    <location>
        <begin position="174"/>
        <end position="215"/>
    </location>
</feature>
<feature type="compositionally biased region" description="Basic residues" evidence="4">
    <location>
        <begin position="225"/>
        <end position="235"/>
    </location>
</feature>
<feature type="compositionally biased region" description="Basic and acidic residues" evidence="4">
    <location>
        <begin position="236"/>
        <end position="287"/>
    </location>
</feature>
<feature type="compositionally biased region" description="Basic and acidic residues" evidence="4">
    <location>
        <begin position="294"/>
        <end position="305"/>
    </location>
</feature>
<feature type="compositionally biased region" description="Polar residues" evidence="4">
    <location>
        <begin position="306"/>
        <end position="315"/>
    </location>
</feature>
<feature type="compositionally biased region" description="Polar residues" evidence="4">
    <location>
        <begin position="366"/>
        <end position="376"/>
    </location>
</feature>
<feature type="compositionally biased region" description="Basic and acidic residues" evidence="4">
    <location>
        <begin position="396"/>
        <end position="405"/>
    </location>
</feature>
<feature type="compositionally biased region" description="Low complexity" evidence="4">
    <location>
        <begin position="406"/>
        <end position="416"/>
    </location>
</feature>
<feature type="compositionally biased region" description="Polar residues" evidence="4">
    <location>
        <begin position="417"/>
        <end position="426"/>
    </location>
</feature>
<feature type="compositionally biased region" description="Low complexity" evidence="4">
    <location>
        <begin position="650"/>
        <end position="662"/>
    </location>
</feature>
<feature type="compositionally biased region" description="Low complexity" evidence="4">
    <location>
        <begin position="680"/>
        <end position="694"/>
    </location>
</feature>
<feature type="compositionally biased region" description="Basic and acidic residues" evidence="4">
    <location>
        <begin position="713"/>
        <end position="722"/>
    </location>
</feature>
<feature type="compositionally biased region" description="Polar residues" evidence="4">
    <location>
        <begin position="849"/>
        <end position="861"/>
    </location>
</feature>
<feature type="compositionally biased region" description="Basic residues" evidence="4">
    <location>
        <begin position="1012"/>
        <end position="1024"/>
    </location>
</feature>
<feature type="compositionally biased region" description="Acidic residues" evidence="4">
    <location>
        <begin position="1072"/>
        <end position="1085"/>
    </location>
</feature>
<feature type="compositionally biased region" description="Polar residues" evidence="4">
    <location>
        <begin position="1086"/>
        <end position="1097"/>
    </location>
</feature>
<feature type="binding site" evidence="3">
    <location>
        <position position="1443"/>
    </location>
    <ligand>
        <name>S-adenosyl-L-methionine</name>
        <dbReference type="ChEBI" id="CHEBI:59789"/>
    </ligand>
</feature>
<comment type="function">
    <text evidence="1">Catalytic component of the COMPASS (Set1C) complex that specifically mono-, di- and trimethylates histone H3 to form H3K4me1/2/3. Binds RNAs which might negatively affect its histone methyltransferase activity. COMPASS recognizes ubiquitinated H2B on one face of the nucleosome which stimulates the methylation of H3 on the opposing face.</text>
</comment>
<comment type="catalytic activity">
    <reaction evidence="1">
        <text>L-lysyl(4)-[histone H3] + 3 S-adenosyl-L-methionine = N(6),N(6),N(6)-trimethyl-L-lysyl(4)-[histone H3] + 3 S-adenosyl-L-homocysteine + 3 H(+)</text>
        <dbReference type="Rhea" id="RHEA:60260"/>
        <dbReference type="Rhea" id="RHEA-COMP:15537"/>
        <dbReference type="Rhea" id="RHEA-COMP:15547"/>
        <dbReference type="ChEBI" id="CHEBI:15378"/>
        <dbReference type="ChEBI" id="CHEBI:29969"/>
        <dbReference type="ChEBI" id="CHEBI:57856"/>
        <dbReference type="ChEBI" id="CHEBI:59789"/>
        <dbReference type="ChEBI" id="CHEBI:61961"/>
        <dbReference type="EC" id="2.1.1.354"/>
    </reaction>
</comment>
<comment type="catalytic activity">
    <reaction evidence="1">
        <text>N(6)-methyl-L-lysyl(4)-[histone H3] + S-adenosyl-L-methionine = N(6),N(6)-dimethyl-L-lysyl(4)-[histone H3] + S-adenosyl-L-homocysteine + H(+)</text>
        <dbReference type="Rhea" id="RHEA:60268"/>
        <dbReference type="Rhea" id="RHEA-COMP:15540"/>
        <dbReference type="Rhea" id="RHEA-COMP:15543"/>
        <dbReference type="ChEBI" id="CHEBI:15378"/>
        <dbReference type="ChEBI" id="CHEBI:57856"/>
        <dbReference type="ChEBI" id="CHEBI:59789"/>
        <dbReference type="ChEBI" id="CHEBI:61929"/>
        <dbReference type="ChEBI" id="CHEBI:61976"/>
    </reaction>
</comment>
<comment type="catalytic activity">
    <reaction evidence="1">
        <text>N(6),N(6)-dimethyl-L-lysyl(4)-[histone H3] + S-adenosyl-L-methionine = N(6),N(6),N(6)-trimethyl-L-lysyl(4)-[histone H3] + S-adenosyl-L-homocysteine + H(+)</text>
        <dbReference type="Rhea" id="RHEA:60272"/>
        <dbReference type="Rhea" id="RHEA-COMP:15537"/>
        <dbReference type="Rhea" id="RHEA-COMP:15540"/>
        <dbReference type="ChEBI" id="CHEBI:15378"/>
        <dbReference type="ChEBI" id="CHEBI:57856"/>
        <dbReference type="ChEBI" id="CHEBI:59789"/>
        <dbReference type="ChEBI" id="CHEBI:61961"/>
        <dbReference type="ChEBI" id="CHEBI:61976"/>
    </reaction>
</comment>
<comment type="subunit">
    <text evidence="1">Component of the Set1C/COMPASS complex.</text>
</comment>
<comment type="subcellular location">
    <subcellularLocation>
        <location evidence="5">Nucleus</location>
    </subcellularLocation>
    <subcellularLocation>
        <location evidence="5">Chromosome</location>
    </subcellularLocation>
</comment>
<comment type="domain">
    <text evidence="1">The RxxxRR motif forms an adapter helix that bridges the nucleosome and ubiquitin.</text>
</comment>
<comment type="similarity">
    <text evidence="3">Belongs to the class V-like SAM-binding methyltransferase superfamily.</text>
</comment>
<proteinExistence type="inferred from homology"/>
<sequence>MPYSSQQNGYTSASTSRLSEQTSSHSRSSREDRHLTEKGRRPPSPEARHRSDRDYDRRRSTEYVRDDDYRRSSRSSHDSRYADAYDHWRSARSAYSPTPRDDRRDEARNDLSSTKRHRSPEHSTSRLRHRSPESAHRRQNGTANRLDSKPDRGGDRKTGEALDSGRSRWSQRAYEYDDWRNERPSARYERYRHDREPHRSRREDEYETKRSRDDSNGNSIYAPTRRSRSRSRSRSRSRDRYRSRDHSRERRRERSRDRSNGTYSSRDDRRPKADRSAHTIKRDEHSTRLNGTSEDSKDLRHESQRRVSASVQSASEGPASTPVARAVYIKHAEVDQEAPAPPTTRDYHSCPQRWPDQADSAVRASSAPNGSATAPSRSDRPPANGSSGRHSPRSLPTREKAEEARTSSTRRPSSQTNDNVNNSRDPLTQRKATSERSFGHVLLPHELPVECRGKNYMATATYKEGVKSIYKSAADKHLVDVDTRDPRRLGKKSSRYRESLHSASFRWDSNSRGKKPLPPPRNLVLTNLSGLLQPHQILLHILPHGRIESSKLEIDPKIGQSLGIFRVTFAHDFDEHGKPLESMPAGQNPQHGAKVAKAACLALNGRMIGQTRAQAFLDRDGEVIAERIKAKLAENEHKLRPTIVPPAPPAAASSSPATPSTTKQSMPPPQVPRGPKVFMPAAPSPSYASSPASARANTDRYEYSATSHSRYRSSYEESRKLASSETYHRRRGTEEYDTYNRSKPYADAQVPAGSRSETRKDIKRPDEEILNELRDKKRPYVHIPRPKNCDIDVTSVEAQLRSTAPIWVREGQKGFYAAFHTSKEANQCKVVNETLTIGGYTLQVDVRSAPSQHAPSQQIRTPSGKHASVPLSMPAPPKQERKAIDTGLRPPTADEKLKVDWSAAELQDAVFRMLQKELADTFVRDVKSRVVGPYLTAYLKPDGEGGKMLAKATMKKPVIPTSINDHGTTLFEATGEARLPSFRKLAGAHPKKKASDADTTTSQAKRDQTDAKKKRGHTHRSKVHRDRDVSSSENESDDMERGMVVAARRNSYTRSKSSTKRRGAAAWLLEASDAEAGTDDVDSTETDALSRSVSASVEPTGEEQIEVDVGAKAKKIPKVKAATVSKKKGTTAARKKLDVAPPEAVVEADQGSETATPETDVPIKTAAAKAKVKPAKTSAKAKSALVDPFEAGLVEDSEDCHYLRLALEHLSRTGELASEHTLPDEIELEVEAEEQAMAAGGIPKHSTGSARTEGYYRIPPEQKAMHLPDRNKATEDVDTSSNAQILQSARNNRADSRRLVLGIEQHKRETATDTDIFKFNQLRTRKKQLKFAKSPIHDWGLYAMELIPAGDMVIEYVGEVVRQQVADEREKQYERQGNFSTYLFRVDDDLVVDATHKGNIARLMNHCCTPNCNAKILTLNGEKRIVLFAKTAIRAGEELTYDYKFQSSADDEDAIPCLCGSPGCRRFL</sequence>
<dbReference type="EC" id="2.1.1.354" evidence="1"/>
<dbReference type="EMBL" id="CM003145">
    <property type="protein sequence ID" value="KIS69337.1"/>
    <property type="molecule type" value="Genomic_DNA"/>
</dbReference>
<dbReference type="RefSeq" id="XP_011389058.1">
    <property type="nucleotide sequence ID" value="XM_011390756.1"/>
</dbReference>
<dbReference type="SMR" id="Q4PB36"/>
<dbReference type="FunCoup" id="Q4PB36">
    <property type="interactions" value="53"/>
</dbReference>
<dbReference type="STRING" id="237631.Q4PB36"/>
<dbReference type="EnsemblFungi" id="KIS69337">
    <property type="protein sequence ID" value="KIS69337"/>
    <property type="gene ID" value="UMAG_02677"/>
</dbReference>
<dbReference type="GeneID" id="23563368"/>
<dbReference type="KEGG" id="uma:UMAG_02677"/>
<dbReference type="VEuPathDB" id="FungiDB:UMAG_02677"/>
<dbReference type="eggNOG" id="KOG1080">
    <property type="taxonomic scope" value="Eukaryota"/>
</dbReference>
<dbReference type="HOGENOM" id="CLU_004532_0_0_1"/>
<dbReference type="InParanoid" id="Q4PB36"/>
<dbReference type="OMA" id="KQYERQG"/>
<dbReference type="OrthoDB" id="308383at2759"/>
<dbReference type="Proteomes" id="UP000000561">
    <property type="component" value="Chromosome 6"/>
</dbReference>
<dbReference type="GO" id="GO:0005694">
    <property type="term" value="C:chromosome"/>
    <property type="evidence" value="ECO:0007669"/>
    <property type="project" value="UniProtKB-SubCell"/>
</dbReference>
<dbReference type="GO" id="GO:0048188">
    <property type="term" value="C:Set1C/COMPASS complex"/>
    <property type="evidence" value="ECO:0000250"/>
    <property type="project" value="UniProtKB"/>
</dbReference>
<dbReference type="GO" id="GO:0042800">
    <property type="term" value="F:histone H3K4 methyltransferase activity"/>
    <property type="evidence" value="ECO:0000318"/>
    <property type="project" value="GO_Central"/>
</dbReference>
<dbReference type="GO" id="GO:0140999">
    <property type="term" value="F:histone H3K4 trimethyltransferase activity"/>
    <property type="evidence" value="ECO:0007669"/>
    <property type="project" value="UniProtKB-EC"/>
</dbReference>
<dbReference type="GO" id="GO:0003723">
    <property type="term" value="F:RNA binding"/>
    <property type="evidence" value="ECO:0000250"/>
    <property type="project" value="UniProtKB"/>
</dbReference>
<dbReference type="GO" id="GO:0032259">
    <property type="term" value="P:methylation"/>
    <property type="evidence" value="ECO:0007669"/>
    <property type="project" value="UniProtKB-KW"/>
</dbReference>
<dbReference type="CDD" id="cd20072">
    <property type="entry name" value="SET_SET1"/>
    <property type="match status" value="1"/>
</dbReference>
<dbReference type="Gene3D" id="2.170.270.10">
    <property type="entry name" value="SET domain"/>
    <property type="match status" value="1"/>
</dbReference>
<dbReference type="InterPro" id="IPR024657">
    <property type="entry name" value="COMPASS_Set1_N-SET"/>
</dbReference>
<dbReference type="InterPro" id="IPR003616">
    <property type="entry name" value="Post-SET_dom"/>
</dbReference>
<dbReference type="InterPro" id="IPR044570">
    <property type="entry name" value="Set1-like"/>
</dbReference>
<dbReference type="InterPro" id="IPR024636">
    <property type="entry name" value="SET_assoc"/>
</dbReference>
<dbReference type="InterPro" id="IPR001214">
    <property type="entry name" value="SET_dom"/>
</dbReference>
<dbReference type="InterPro" id="IPR046341">
    <property type="entry name" value="SET_dom_sf"/>
</dbReference>
<dbReference type="PANTHER" id="PTHR45814">
    <property type="entry name" value="HISTONE-LYSINE N-METHYLTRANSFERASE SETD1"/>
    <property type="match status" value="1"/>
</dbReference>
<dbReference type="PANTHER" id="PTHR45814:SF2">
    <property type="entry name" value="HISTONE-LYSINE N-METHYLTRANSFERASE SETD1"/>
    <property type="match status" value="1"/>
</dbReference>
<dbReference type="Pfam" id="PF11764">
    <property type="entry name" value="N-SET"/>
    <property type="match status" value="1"/>
</dbReference>
<dbReference type="Pfam" id="PF00856">
    <property type="entry name" value="SET"/>
    <property type="match status" value="1"/>
</dbReference>
<dbReference type="Pfam" id="PF11767">
    <property type="entry name" value="SET_assoc"/>
    <property type="match status" value="1"/>
</dbReference>
<dbReference type="SMART" id="SM01291">
    <property type="entry name" value="N-SET"/>
    <property type="match status" value="1"/>
</dbReference>
<dbReference type="SMART" id="SM00317">
    <property type="entry name" value="SET"/>
    <property type="match status" value="1"/>
</dbReference>
<dbReference type="SUPFAM" id="SSF82199">
    <property type="entry name" value="SET domain"/>
    <property type="match status" value="1"/>
</dbReference>
<dbReference type="PROSITE" id="PS50868">
    <property type="entry name" value="POST_SET"/>
    <property type="match status" value="1"/>
</dbReference>
<dbReference type="PROSITE" id="PS50280">
    <property type="entry name" value="SET"/>
    <property type="match status" value="1"/>
</dbReference>